<dbReference type="EMBL" id="CP000239">
    <property type="protein sequence ID" value="ABC99480.1"/>
    <property type="molecule type" value="Genomic_DNA"/>
</dbReference>
<dbReference type="RefSeq" id="WP_011430157.1">
    <property type="nucleotide sequence ID" value="NC_007775.1"/>
</dbReference>
<dbReference type="SMR" id="Q2JUX7"/>
<dbReference type="STRING" id="321327.CYA_1299"/>
<dbReference type="KEGG" id="cya:CYA_1299"/>
<dbReference type="eggNOG" id="COG0048">
    <property type="taxonomic scope" value="Bacteria"/>
</dbReference>
<dbReference type="HOGENOM" id="CLU_104295_1_2_3"/>
<dbReference type="OrthoDB" id="9802366at2"/>
<dbReference type="Proteomes" id="UP000008818">
    <property type="component" value="Chromosome"/>
</dbReference>
<dbReference type="GO" id="GO:0015935">
    <property type="term" value="C:small ribosomal subunit"/>
    <property type="evidence" value="ECO:0007669"/>
    <property type="project" value="InterPro"/>
</dbReference>
<dbReference type="GO" id="GO:0019843">
    <property type="term" value="F:rRNA binding"/>
    <property type="evidence" value="ECO:0007669"/>
    <property type="project" value="UniProtKB-UniRule"/>
</dbReference>
<dbReference type="GO" id="GO:0003735">
    <property type="term" value="F:structural constituent of ribosome"/>
    <property type="evidence" value="ECO:0007669"/>
    <property type="project" value="InterPro"/>
</dbReference>
<dbReference type="GO" id="GO:0000049">
    <property type="term" value="F:tRNA binding"/>
    <property type="evidence" value="ECO:0007669"/>
    <property type="project" value="UniProtKB-UniRule"/>
</dbReference>
<dbReference type="GO" id="GO:0006412">
    <property type="term" value="P:translation"/>
    <property type="evidence" value="ECO:0007669"/>
    <property type="project" value="UniProtKB-UniRule"/>
</dbReference>
<dbReference type="CDD" id="cd03368">
    <property type="entry name" value="Ribosomal_S12"/>
    <property type="match status" value="1"/>
</dbReference>
<dbReference type="FunFam" id="2.40.50.140:FF:000001">
    <property type="entry name" value="30S ribosomal protein S12"/>
    <property type="match status" value="1"/>
</dbReference>
<dbReference type="Gene3D" id="2.40.50.140">
    <property type="entry name" value="Nucleic acid-binding proteins"/>
    <property type="match status" value="1"/>
</dbReference>
<dbReference type="HAMAP" id="MF_00403_B">
    <property type="entry name" value="Ribosomal_uS12_B"/>
    <property type="match status" value="1"/>
</dbReference>
<dbReference type="InterPro" id="IPR012340">
    <property type="entry name" value="NA-bd_OB-fold"/>
</dbReference>
<dbReference type="InterPro" id="IPR006032">
    <property type="entry name" value="Ribosomal_uS12"/>
</dbReference>
<dbReference type="InterPro" id="IPR005679">
    <property type="entry name" value="Ribosomal_uS12_bac"/>
</dbReference>
<dbReference type="NCBIfam" id="TIGR00981">
    <property type="entry name" value="rpsL_bact"/>
    <property type="match status" value="1"/>
</dbReference>
<dbReference type="PANTHER" id="PTHR11652">
    <property type="entry name" value="30S RIBOSOMAL PROTEIN S12 FAMILY MEMBER"/>
    <property type="match status" value="1"/>
</dbReference>
<dbReference type="Pfam" id="PF00164">
    <property type="entry name" value="Ribosom_S12_S23"/>
    <property type="match status" value="1"/>
</dbReference>
<dbReference type="PIRSF" id="PIRSF002133">
    <property type="entry name" value="Ribosomal_S12/S23"/>
    <property type="match status" value="1"/>
</dbReference>
<dbReference type="PRINTS" id="PR01034">
    <property type="entry name" value="RIBOSOMALS12"/>
</dbReference>
<dbReference type="SUPFAM" id="SSF50249">
    <property type="entry name" value="Nucleic acid-binding proteins"/>
    <property type="match status" value="1"/>
</dbReference>
<dbReference type="PROSITE" id="PS00055">
    <property type="entry name" value="RIBOSOMAL_S12"/>
    <property type="match status" value="1"/>
</dbReference>
<protein>
    <recommendedName>
        <fullName evidence="2">Small ribosomal subunit protein uS12</fullName>
    </recommendedName>
    <alternativeName>
        <fullName evidence="4">30S ribosomal protein S12</fullName>
    </alternativeName>
</protein>
<evidence type="ECO:0000250" key="1"/>
<evidence type="ECO:0000255" key="2">
    <source>
        <dbReference type="HAMAP-Rule" id="MF_00403"/>
    </source>
</evidence>
<evidence type="ECO:0000256" key="3">
    <source>
        <dbReference type="SAM" id="MobiDB-lite"/>
    </source>
</evidence>
<evidence type="ECO:0000305" key="4"/>
<proteinExistence type="inferred from homology"/>
<keyword id="KW-0488">Methylation</keyword>
<keyword id="KW-0687">Ribonucleoprotein</keyword>
<keyword id="KW-0689">Ribosomal protein</keyword>
<keyword id="KW-0694">RNA-binding</keyword>
<keyword id="KW-0699">rRNA-binding</keyword>
<keyword id="KW-0820">tRNA-binding</keyword>
<accession>Q2JUX7</accession>
<organism>
    <name type="scientific">Synechococcus sp. (strain JA-3-3Ab)</name>
    <name type="common">Cyanobacteria bacterium Yellowstone A-Prime</name>
    <dbReference type="NCBI Taxonomy" id="321327"/>
    <lineage>
        <taxon>Bacteria</taxon>
        <taxon>Bacillati</taxon>
        <taxon>Cyanobacteriota</taxon>
        <taxon>Cyanophyceae</taxon>
        <taxon>Synechococcales</taxon>
        <taxon>Synechococcaceae</taxon>
        <taxon>Synechococcus</taxon>
    </lineage>
</organism>
<gene>
    <name evidence="2" type="primary">rpsL</name>
    <name evidence="2" type="synonym">rps12</name>
    <name type="ordered locus">CYA_1299</name>
</gene>
<reference key="1">
    <citation type="journal article" date="2007" name="ISME J.">
        <title>Population level functional diversity in a microbial community revealed by comparative genomic and metagenomic analyses.</title>
        <authorList>
            <person name="Bhaya D."/>
            <person name="Grossman A.R."/>
            <person name="Steunou A.-S."/>
            <person name="Khuri N."/>
            <person name="Cohan F.M."/>
            <person name="Hamamura N."/>
            <person name="Melendrez M.C."/>
            <person name="Bateson M.M."/>
            <person name="Ward D.M."/>
            <person name="Heidelberg J.F."/>
        </authorList>
    </citation>
    <scope>NUCLEOTIDE SEQUENCE [LARGE SCALE GENOMIC DNA]</scope>
    <source>
        <strain>JA-3-3Ab</strain>
    </source>
</reference>
<feature type="chain" id="PRO_0000238149" description="Small ribosomal subunit protein uS12">
    <location>
        <begin position="1"/>
        <end position="135"/>
    </location>
</feature>
<feature type="region of interest" description="Disordered" evidence="3">
    <location>
        <begin position="106"/>
        <end position="135"/>
    </location>
</feature>
<feature type="compositionally biased region" description="Basic residues" evidence="3">
    <location>
        <begin position="113"/>
        <end position="123"/>
    </location>
</feature>
<feature type="compositionally biased region" description="Low complexity" evidence="3">
    <location>
        <begin position="124"/>
        <end position="135"/>
    </location>
</feature>
<feature type="modified residue" description="3-methylthioaspartic acid" evidence="1">
    <location>
        <position position="89"/>
    </location>
</feature>
<sequence>MPTIQQLIREERKAAVRKTKAPALKGCPQRRGVCTRVYTTTPKKPNSALRKVARVRLTSGFEVTAYIPGIGHNLQEHSVVMIRGGRVKDLPGVRYHIIRGTLDAAGVKDRKQGRSKYGAKRPKPGQAPAAAGKKK</sequence>
<name>RS12_SYNJA</name>
<comment type="function">
    <text evidence="2">With S4 and S5 plays an important role in translational accuracy.</text>
</comment>
<comment type="function">
    <text evidence="2">Interacts with and stabilizes bases of the 16S rRNA that are involved in tRNA selection in the A site and with the mRNA backbone. Located at the interface of the 30S and 50S subunits, it traverses the body of the 30S subunit contacting proteins on the other side and probably holding the rRNA structure together. The combined cluster of proteins S8, S12 and S17 appears to hold together the shoulder and platform of the 30S subunit.</text>
</comment>
<comment type="subunit">
    <text evidence="2">Part of the 30S ribosomal subunit. Contacts proteins S8 and S17. May interact with IF1 in the 30S initiation complex.</text>
</comment>
<comment type="similarity">
    <text evidence="2">Belongs to the universal ribosomal protein uS12 family.</text>
</comment>